<gene>
    <name evidence="2" type="primary">nirG</name>
</gene>
<name>NIRG_PARPN</name>
<organism>
    <name type="scientific">Paracoccus pantotrophus</name>
    <name type="common">Thiosphaera pantotropha</name>
    <dbReference type="NCBI Taxonomy" id="82367"/>
    <lineage>
        <taxon>Bacteria</taxon>
        <taxon>Pseudomonadati</taxon>
        <taxon>Pseudomonadota</taxon>
        <taxon>Alphaproteobacteria</taxon>
        <taxon>Rhodobacterales</taxon>
        <taxon>Paracoccaceae</taxon>
        <taxon>Paracoccus</taxon>
    </lineage>
</organism>
<keyword id="KW-0456">Lyase</keyword>
<proteinExistence type="evidence at protein level"/>
<accession>I6TCK3</accession>
<sequence>MRRQTLPPEALDDTDRAILNRLQEGFPLTPRPFDDAGAALGLTGAQLIERLERLRAIGAITRFGPFYDAAAMGGAFCLCALSAPQADFDRIAALVNAHPEVAHNYARDHALNMWFVLATATPEGIAETAGRIEAETGLTVWRFPKLREFFIGFRVAA</sequence>
<feature type="chain" id="PRO_0000450516" description="Siroheme decarboxylase NirG subunit">
    <location>
        <begin position="1"/>
        <end position="157"/>
    </location>
</feature>
<comment type="function">
    <text evidence="1">Involved in heme d1 biosynthesis. Catalyzes the decarboxylation of siroheme into didecarboxysiroheme (PubMed:21969545). Siroheme is probably decarboxylated to monodecarboxysiroheme, which is in turn decarboxylated to didecarboxysiroheme (PubMed:21969545).</text>
</comment>
<comment type="catalytic activity">
    <reaction evidence="1">
        <text>siroheme + 2 H(+) = 12,18-didecarboxysiroheme + 2 CO2</text>
        <dbReference type="Rhea" id="RHEA:19093"/>
        <dbReference type="ChEBI" id="CHEBI:15378"/>
        <dbReference type="ChEBI" id="CHEBI:16526"/>
        <dbReference type="ChEBI" id="CHEBI:60052"/>
        <dbReference type="ChEBI" id="CHEBI:140497"/>
        <dbReference type="EC" id="4.1.1.111"/>
    </reaction>
</comment>
<comment type="pathway">
    <text evidence="1">Porphyrin-containing compound metabolism.</text>
</comment>
<comment type="subunit">
    <text evidence="1">Forms a complex composed of NirDL, NirG and NirH. All proteins are required for the total conversion of siroheme to didecarboxysiroheme.</text>
</comment>
<comment type="similarity">
    <text evidence="3">Belongs to the Ahb/Nir family.</text>
</comment>
<protein>
    <recommendedName>
        <fullName evidence="3">Siroheme decarboxylase NirG subunit</fullName>
        <ecNumber evidence="1">4.1.1.111</ecNumber>
    </recommendedName>
</protein>
<evidence type="ECO:0000269" key="1">
    <source>
    </source>
</evidence>
<evidence type="ECO:0000303" key="2">
    <source>
    </source>
</evidence>
<evidence type="ECO:0000305" key="3"/>
<reference key="1">
    <citation type="journal article" date="2011" name="Proc. Natl. Acad. Sci. U.S.A.">
        <title>Molecular hijacking of siroheme for the synthesis of heme and d1 heme.</title>
        <authorList>
            <person name="Bali S."/>
            <person name="Lawrence A.D."/>
            <person name="Lobo S.A."/>
            <person name="Saraiva L.M."/>
            <person name="Golding B.T."/>
            <person name="Palmer D.J."/>
            <person name="Howard M.J."/>
            <person name="Ferguson S.J."/>
            <person name="Warren M.J."/>
        </authorList>
    </citation>
    <scope>NUCLEOTIDE SEQUENCE [GENOMIC DNA]</scope>
    <scope>FUNCTION</scope>
    <scope>CATALYTIC ACTIVITY</scope>
    <scope>PATHWAY</scope>
    <scope>SUBUNIT</scope>
    <source>
        <strain>ATCC 35512 / DSM 2944 / CIP 106514 / LMD 82.5 / NBRC 102493 / NCCB 82005 / GB17</strain>
    </source>
</reference>
<dbReference type="EC" id="4.1.1.111" evidence="1"/>
<dbReference type="EMBL" id="JQ922109">
    <property type="protein sequence ID" value="AFM94358.1"/>
    <property type="molecule type" value="Genomic_DNA"/>
</dbReference>
<dbReference type="SMR" id="I6TCK3"/>
<dbReference type="BioCyc" id="MetaCyc:MONOMER-18862"/>
<dbReference type="GO" id="GO:0016829">
    <property type="term" value="F:lyase activity"/>
    <property type="evidence" value="ECO:0007669"/>
    <property type="project" value="UniProtKB-KW"/>
</dbReference>
<dbReference type="FunFam" id="3.30.70.3460:FF:000001">
    <property type="entry name" value="Heme d1 biosynthesis protein NirG"/>
    <property type="match status" value="1"/>
</dbReference>
<dbReference type="Gene3D" id="3.30.70.3460">
    <property type="match status" value="1"/>
</dbReference>
<dbReference type="Gene3D" id="1.10.10.10">
    <property type="entry name" value="Winged helix-like DNA-binding domain superfamily/Winged helix DNA-binding domain"/>
    <property type="match status" value="1"/>
</dbReference>
<dbReference type="InterPro" id="IPR040523">
    <property type="entry name" value="AsnC_trans_reg2"/>
</dbReference>
<dbReference type="InterPro" id="IPR050684">
    <property type="entry name" value="HTH-Siroheme_Decarb"/>
</dbReference>
<dbReference type="InterPro" id="IPR053953">
    <property type="entry name" value="NirdL-like_HTH"/>
</dbReference>
<dbReference type="InterPro" id="IPR036388">
    <property type="entry name" value="WH-like_DNA-bd_sf"/>
</dbReference>
<dbReference type="PANTHER" id="PTHR43413:SF1">
    <property type="entry name" value="SIROHEME DECARBOXYLASE NIRL SUBUNIT"/>
    <property type="match status" value="1"/>
</dbReference>
<dbReference type="PANTHER" id="PTHR43413">
    <property type="entry name" value="TRANSCRIPTIONAL REGULATOR, ASNC FAMILY"/>
    <property type="match status" value="1"/>
</dbReference>
<dbReference type="Pfam" id="PF17805">
    <property type="entry name" value="AsnC_trans_reg2"/>
    <property type="match status" value="1"/>
</dbReference>
<dbReference type="Pfam" id="PF22451">
    <property type="entry name" value="NirdL-like_HTH"/>
    <property type="match status" value="1"/>
</dbReference>